<name>KJ01_HUMAN</name>
<evidence type="ECO:0000303" key="1">
    <source>
    </source>
</evidence>
<evidence type="ECO:0000303" key="2">
    <source>
    </source>
</evidence>
<evidence type="ECO:0000303" key="3">
    <source>
    </source>
</evidence>
<evidence type="ECO:0000303" key="4">
    <source>
    </source>
</evidence>
<evidence type="ECO:0000303" key="5">
    <source>
    </source>
</evidence>
<evidence type="ECO:0000303" key="6">
    <source ref="3"/>
</evidence>
<evidence type="ECO:0000305" key="7"/>
<proteinExistence type="predicted"/>
<feature type="chain" id="PRO_0000439095" description="Immunoglobulin kappa joining 1">
    <location>
        <begin position="1" status="less than"/>
        <end position="12" status="greater than"/>
    </location>
</feature>
<feature type="non-terminal residue">
    <location>
        <position position="1"/>
    </location>
</feature>
<feature type="non-terminal residue">
    <location>
        <position position="12"/>
    </location>
</feature>
<comment type="function">
    <text evidence="2 3 4 5">J region of the variable domain of immunoglobulin kappa light chains that participates in the antigen recognition (PubMed:24600447). Immunoglobulins, also known as antibodies, are membrane-bound or secreted glycoproteins produced by B lymphocytes. In the recognition phase of humoral immunity, the membrane-bound immunoglobulins serve as receptors which, upon binding of a specific antigen, trigger the clonal expansion and differentiation of B lymphocytes into immunoglobulins-secreting plasma cells. Secreted immunoglobulins mediate the effector phase of humoral immunity, which results in the elimination of bound antigens (PubMed:20176268, PubMed:22158414). The antigen binding site is formed by the variable domain of one heavy chain, together with that of its associated light chain. Thus, each immunoglobulin has two antigen binding sites with remarkable affinity for a particular antigen. The variable domains are assembled by a process called V-(D)-J rearrangement and can then be subjected to somatic hypermutations which, after exposure to antigen and selection, allow affinity maturation for a particular antigen (PubMed:17576170, PubMed:20176268).</text>
</comment>
<comment type="subunit">
    <text evidence="3">Immunoglobulins are composed of two identical heavy chains and two identical light chains; disulfide-linked.</text>
</comment>
<comment type="subcellular location">
    <subcellularLocation>
        <location evidence="3 4">Secreted</location>
    </subcellularLocation>
    <subcellularLocation>
        <location evidence="3 4">Cell membrane</location>
    </subcellularLocation>
</comment>
<comment type="polymorphism">
    <text evidence="7">The sequence shown is that of IMGT allele IGKJ1*01.</text>
</comment>
<comment type="caution">
    <text evidence="7">There are several genes encoding the J region in the immunoglobulin kappa locus. The peptide described in this entry is a representative for all the peptides encoded by these genes. For an example of a full-length immunoglobulin kappa light chain see AC P0DOX7.</text>
</comment>
<reference key="1">
    <citation type="journal article" date="2005" name="Nature">
        <title>Generation and annotation of the DNA sequences of human chromosomes 2 and 4.</title>
        <authorList>
            <person name="Hillier L.W."/>
            <person name="Graves T.A."/>
            <person name="Fulton R.S."/>
            <person name="Fulton L.A."/>
            <person name="Pepin K.H."/>
            <person name="Minx P."/>
            <person name="Wagner-McPherson C."/>
            <person name="Layman D."/>
            <person name="Wylie K."/>
            <person name="Sekhon M."/>
            <person name="Becker M.C."/>
            <person name="Fewell G.A."/>
            <person name="Delehaunty K.D."/>
            <person name="Miner T.L."/>
            <person name="Nash W.E."/>
            <person name="Kremitzki C."/>
            <person name="Oddy L."/>
            <person name="Du H."/>
            <person name="Sun H."/>
            <person name="Bradshaw-Cordum H."/>
            <person name="Ali J."/>
            <person name="Carter J."/>
            <person name="Cordes M."/>
            <person name="Harris A."/>
            <person name="Isak A."/>
            <person name="van Brunt A."/>
            <person name="Nguyen C."/>
            <person name="Du F."/>
            <person name="Courtney L."/>
            <person name="Kalicki J."/>
            <person name="Ozersky P."/>
            <person name="Abbott S."/>
            <person name="Armstrong J."/>
            <person name="Belter E.A."/>
            <person name="Caruso L."/>
            <person name="Cedroni M."/>
            <person name="Cotton M."/>
            <person name="Davidson T."/>
            <person name="Desai A."/>
            <person name="Elliott G."/>
            <person name="Erb T."/>
            <person name="Fronick C."/>
            <person name="Gaige T."/>
            <person name="Haakenson W."/>
            <person name="Haglund K."/>
            <person name="Holmes A."/>
            <person name="Harkins R."/>
            <person name="Kim K."/>
            <person name="Kruchowski S.S."/>
            <person name="Strong C.M."/>
            <person name="Grewal N."/>
            <person name="Goyea E."/>
            <person name="Hou S."/>
            <person name="Levy A."/>
            <person name="Martinka S."/>
            <person name="Mead K."/>
            <person name="McLellan M.D."/>
            <person name="Meyer R."/>
            <person name="Randall-Maher J."/>
            <person name="Tomlinson C."/>
            <person name="Dauphin-Kohlberg S."/>
            <person name="Kozlowicz-Reilly A."/>
            <person name="Shah N."/>
            <person name="Swearengen-Shahid S."/>
            <person name="Snider J."/>
            <person name="Strong J.T."/>
            <person name="Thompson J."/>
            <person name="Yoakum M."/>
            <person name="Leonard S."/>
            <person name="Pearman C."/>
            <person name="Trani L."/>
            <person name="Radionenko M."/>
            <person name="Waligorski J.E."/>
            <person name="Wang C."/>
            <person name="Rock S.M."/>
            <person name="Tin-Wollam A.-M."/>
            <person name="Maupin R."/>
            <person name="Latreille P."/>
            <person name="Wendl M.C."/>
            <person name="Yang S.-P."/>
            <person name="Pohl C."/>
            <person name="Wallis J.W."/>
            <person name="Spieth J."/>
            <person name="Bieri T.A."/>
            <person name="Berkowicz N."/>
            <person name="Nelson J.O."/>
            <person name="Osborne J."/>
            <person name="Ding L."/>
            <person name="Meyer R."/>
            <person name="Sabo A."/>
            <person name="Shotland Y."/>
            <person name="Sinha P."/>
            <person name="Wohldmann P.E."/>
            <person name="Cook L.L."/>
            <person name="Hickenbotham M.T."/>
            <person name="Eldred J."/>
            <person name="Williams D."/>
            <person name="Jones T.A."/>
            <person name="She X."/>
            <person name="Ciccarelli F.D."/>
            <person name="Izaurralde E."/>
            <person name="Taylor J."/>
            <person name="Schmutz J."/>
            <person name="Myers R.M."/>
            <person name="Cox D.R."/>
            <person name="Huang X."/>
            <person name="McPherson J.D."/>
            <person name="Mardis E.R."/>
            <person name="Clifton S.W."/>
            <person name="Warren W.C."/>
            <person name="Chinwalla A.T."/>
            <person name="Eddy S.R."/>
            <person name="Marra M.A."/>
            <person name="Ovcharenko I."/>
            <person name="Furey T.S."/>
            <person name="Miller W."/>
            <person name="Eichler E.E."/>
            <person name="Bork P."/>
            <person name="Suyama M."/>
            <person name="Torrents D."/>
            <person name="Waterston R.H."/>
            <person name="Wilson R.K."/>
        </authorList>
    </citation>
    <scope>NUCLEOTIDE SEQUENCE [LARGE SCALE GENOMIC DNA] (IMGT ALLELE IGKJ1*01)</scope>
</reference>
<reference key="2">
    <citation type="journal article" date="2001" name="Exp. Clin. Immunogenet.">
        <title>Nomenclature of the human immunoglobulin kappa (IGK) genes.</title>
        <authorList>
            <person name="Lefranc M.P."/>
        </authorList>
    </citation>
    <scope>NOMENCLATURE</scope>
</reference>
<reference key="3">
    <citation type="book" date="2001" name="The Immunoglobulin FactsBook.">
        <title>The Immunoglobulin FactsBook.</title>
        <editorList>
            <person name="Lefranc M.P."/>
            <person name="Lefranc G."/>
        </editorList>
        <authorList>
            <person name="Lefranc M.P."/>
            <person name="Lefranc G."/>
        </authorList>
    </citation>
    <scope>NOMENCLATURE</scope>
</reference>
<reference key="4">
    <citation type="journal article" date="2007" name="Annu. Rev. Genet.">
        <title>Immunoglobulin somatic hypermutation.</title>
        <authorList>
            <person name="Teng G."/>
            <person name="Papavasiliou F.N."/>
        </authorList>
    </citation>
    <scope>REVIEW ON SOMATIC HYPERMUTATION</scope>
</reference>
<reference key="5">
    <citation type="journal article" date="2010" name="J. Allergy Clin. Immunol.">
        <title>Structure and function of immunoglobulins.</title>
        <authorList>
            <person name="Schroeder H.W. Jr."/>
            <person name="Cavacini L."/>
        </authorList>
    </citation>
    <scope>REVIEW ON IMMUNOGLOBULINS</scope>
</reference>
<reference key="6">
    <citation type="journal article" date="2012" name="Nat. Rev. Immunol.">
        <title>Molecular programming of B cell memory.</title>
        <authorList>
            <person name="McHeyzer-Williams M."/>
            <person name="Okitsu S."/>
            <person name="Wang N."/>
            <person name="McHeyzer-Williams L."/>
        </authorList>
    </citation>
    <scope>REVIEW ON FUNCTION</scope>
</reference>
<reference key="7">
    <citation type="journal article" date="2014" name="Front. Immunol.">
        <title>Immunoglobulin and T Cell Receptor Genes: IMGT((R)) and the Birth and Rise of Immunoinformatics.</title>
        <authorList>
            <person name="Lefranc M.P."/>
        </authorList>
    </citation>
    <scope>NOMENCLATURE</scope>
</reference>
<keyword id="KW-1064">Adaptive immunity</keyword>
<keyword id="KW-1003">Cell membrane</keyword>
<keyword id="KW-0391">Immunity</keyword>
<keyword id="KW-1280">Immunoglobulin</keyword>
<keyword id="KW-0472">Membrane</keyword>
<keyword id="KW-1185">Reference proteome</keyword>
<keyword id="KW-0964">Secreted</keyword>
<protein>
    <recommendedName>
        <fullName evidence="1 6">Immunoglobulin kappa joining 1</fullName>
    </recommendedName>
</protein>
<sequence>WTFGQGTKVEIK</sequence>
<dbReference type="EMBL" id="AC244205">
    <property type="status" value="NOT_ANNOTATED_CDS"/>
    <property type="molecule type" value="Genomic_DNA"/>
</dbReference>
<dbReference type="IMGT_GENE-DB" id="IGKJ1"/>
<dbReference type="BioMuta" id="IGKJ1"/>
<dbReference type="MassIVE" id="A0A0A0MT89"/>
<dbReference type="Ensembl" id="ENST00000390242.2">
    <property type="protein sequence ID" value="ENSP00000419111.1"/>
    <property type="gene ID" value="ENSG00000211597.2"/>
</dbReference>
<dbReference type="UCSC" id="uc061lqh.1">
    <property type="organism name" value="human"/>
</dbReference>
<dbReference type="AGR" id="HGNC:5719"/>
<dbReference type="GeneCards" id="IGKJ1"/>
<dbReference type="HGNC" id="HGNC:5719">
    <property type="gene designation" value="IGKJ1"/>
</dbReference>
<dbReference type="HPA" id="ENSG00000211597">
    <property type="expression patterns" value="Group enriched (intestine, lymphoid tissue, salivary gland, stomach, urinary bladder)"/>
</dbReference>
<dbReference type="neXtProt" id="NX_A0A0A0MT89"/>
<dbReference type="VEuPathDB" id="HostDB:ENSG00000211597"/>
<dbReference type="HOGENOM" id="CLU_221942_8_0_1"/>
<dbReference type="InParanoid" id="A0A0A0MT89"/>
<dbReference type="PAN-GO" id="A0A0A0MT89">
    <property type="GO annotations" value="0 GO annotations based on evolutionary models"/>
</dbReference>
<dbReference type="SignaLink" id="A0A0A0MT89"/>
<dbReference type="ChiTaRS" id="IGKJ1">
    <property type="organism name" value="human"/>
</dbReference>
<dbReference type="Pharos" id="A0A0A0MT89">
    <property type="development level" value="Tdark"/>
</dbReference>
<dbReference type="PRO" id="PR:A0A0A0MT89"/>
<dbReference type="Proteomes" id="UP000005640">
    <property type="component" value="Chromosome 2"/>
</dbReference>
<dbReference type="Bgee" id="ENSG00000211597">
    <property type="expression patterns" value="Expressed in duodenum and 80 other cell types or tissues"/>
</dbReference>
<dbReference type="GO" id="GO:0005576">
    <property type="term" value="C:extracellular region"/>
    <property type="evidence" value="ECO:0007669"/>
    <property type="project" value="UniProtKB-SubCell"/>
</dbReference>
<dbReference type="GO" id="GO:0019814">
    <property type="term" value="C:immunoglobulin complex"/>
    <property type="evidence" value="ECO:0007669"/>
    <property type="project" value="UniProtKB-KW"/>
</dbReference>
<dbReference type="GO" id="GO:0005886">
    <property type="term" value="C:plasma membrane"/>
    <property type="evidence" value="ECO:0007669"/>
    <property type="project" value="UniProtKB-SubCell"/>
</dbReference>
<dbReference type="GO" id="GO:0002250">
    <property type="term" value="P:adaptive immune response"/>
    <property type="evidence" value="ECO:0007669"/>
    <property type="project" value="UniProtKB-KW"/>
</dbReference>
<gene>
    <name evidence="1 6" type="primary">IGKJ1</name>
</gene>
<accession>A0A0A0MT89</accession>
<organism>
    <name type="scientific">Homo sapiens</name>
    <name type="common">Human</name>
    <dbReference type="NCBI Taxonomy" id="9606"/>
    <lineage>
        <taxon>Eukaryota</taxon>
        <taxon>Metazoa</taxon>
        <taxon>Chordata</taxon>
        <taxon>Craniata</taxon>
        <taxon>Vertebrata</taxon>
        <taxon>Euteleostomi</taxon>
        <taxon>Mammalia</taxon>
        <taxon>Eutheria</taxon>
        <taxon>Euarchontoglires</taxon>
        <taxon>Primates</taxon>
        <taxon>Haplorrhini</taxon>
        <taxon>Catarrhini</taxon>
        <taxon>Hominidae</taxon>
        <taxon>Homo</taxon>
    </lineage>
</organism>